<reference evidence="6 7" key="1">
    <citation type="journal article" date="1998" name="Insect Biochem. Mol. Biol.">
        <title>Vitelline envelope genes of the yellow fever mosquito, Aedes aegypti.</title>
        <authorList>
            <person name="Edwards M.J."/>
            <person name="Severson D.W."/>
            <person name="Hagedorn H.H."/>
        </authorList>
    </citation>
    <scope>NUCLEOTIDE SEQUENCE [GENOMIC DNA]</scope>
    <scope>TISSUE SPECIFICITY</scope>
    <scope>DEVELOPMENTAL STAGE</scope>
    <source>
        <strain evidence="7">Rockefeller</strain>
    </source>
</reference>
<reference evidence="8" key="2">
    <citation type="journal article" date="2007" name="Genome Biol.">
        <title>Analysis of 14 BAC sequences from the Aedes aegypti genome: a benchmark for genome annotation and assembly.</title>
        <authorList>
            <person name="Lobo N.F."/>
            <person name="Campbell K.S."/>
            <person name="Thaner D."/>
            <person name="Debruyn B."/>
            <person name="Koo H."/>
            <person name="Gelbart W.M."/>
            <person name="Loftus B.J."/>
            <person name="Severson D.W."/>
            <person name="Collins F.H."/>
        </authorList>
    </citation>
    <scope>NUCLEOTIDE SEQUENCE [GENOMIC DNA]</scope>
</reference>
<reference evidence="9" key="3">
    <citation type="journal article" date="2007" name="Science">
        <title>Genome sequence of Aedes aegypti, a major arbovirus vector.</title>
        <authorList>
            <person name="Nene V."/>
            <person name="Wortman J.R."/>
            <person name="Lawson D."/>
            <person name="Haas B.J."/>
            <person name="Kodira C.D."/>
            <person name="Tu Z.J."/>
            <person name="Loftus B.J."/>
            <person name="Xi Z."/>
            <person name="Megy K."/>
            <person name="Grabherr M."/>
            <person name="Ren Q."/>
            <person name="Zdobnov E.M."/>
            <person name="Lobo N.F."/>
            <person name="Campbell K.S."/>
            <person name="Brown S.E."/>
            <person name="Bonaldo M.F."/>
            <person name="Zhu J."/>
            <person name="Sinkins S.P."/>
            <person name="Hogenkamp D.G."/>
            <person name="Amedeo P."/>
            <person name="Arensburger P."/>
            <person name="Atkinson P.W."/>
            <person name="Bidwell S.L."/>
            <person name="Biedler J."/>
            <person name="Birney E."/>
            <person name="Bruggner R.V."/>
            <person name="Costas J."/>
            <person name="Coy M.R."/>
            <person name="Crabtree J."/>
            <person name="Crawford M."/>
            <person name="DeBruyn B."/>
            <person name="DeCaprio D."/>
            <person name="Eiglmeier K."/>
            <person name="Eisenstadt E."/>
            <person name="El-Dorry H."/>
            <person name="Gelbart W.M."/>
            <person name="Gomes S.L."/>
            <person name="Hammond M."/>
            <person name="Hannick L.I."/>
            <person name="Hogan J.R."/>
            <person name="Holmes M.H."/>
            <person name="Jaffe D."/>
            <person name="Johnston S.J."/>
            <person name="Kennedy R.C."/>
            <person name="Koo H."/>
            <person name="Kravitz S."/>
            <person name="Kriventseva E.V."/>
            <person name="Kulp D."/>
            <person name="Labutti K."/>
            <person name="Lee E."/>
            <person name="Li S."/>
            <person name="Lovin D.D."/>
            <person name="Mao C."/>
            <person name="Mauceli E."/>
            <person name="Menck C.F."/>
            <person name="Miller J.R."/>
            <person name="Montgomery P."/>
            <person name="Mori A."/>
            <person name="Nascimento A.L."/>
            <person name="Naveira H.F."/>
            <person name="Nusbaum C."/>
            <person name="O'Leary S.B."/>
            <person name="Orvis J."/>
            <person name="Pertea M."/>
            <person name="Quesneville H."/>
            <person name="Reidenbach K.R."/>
            <person name="Rogers Y.-H.C."/>
            <person name="Roth C.W."/>
            <person name="Schneider J.R."/>
            <person name="Schatz M."/>
            <person name="Shumway M."/>
            <person name="Stanke M."/>
            <person name="Stinson E.O."/>
            <person name="Tubio J.M.C."/>
            <person name="Vanzee J.P."/>
            <person name="Verjovski-Almeida S."/>
            <person name="Werner D."/>
            <person name="White O.R."/>
            <person name="Wyder S."/>
            <person name="Zeng Q."/>
            <person name="Zhao Q."/>
            <person name="Zhao Y."/>
            <person name="Hill C.A."/>
            <person name="Raikhel A.S."/>
            <person name="Soares M.B."/>
            <person name="Knudson D.L."/>
            <person name="Lee N.H."/>
            <person name="Galagan J."/>
            <person name="Salzberg S.L."/>
            <person name="Paulsen I.T."/>
            <person name="Dimopoulos G."/>
            <person name="Collins F.H."/>
            <person name="Bruce B."/>
            <person name="Fraser-Liggett C.M."/>
            <person name="Severson D.W."/>
        </authorList>
    </citation>
    <scope>NUCLEOTIDE SEQUENCE [LARGE SCALE GENOMIC DNA]</scope>
    <source>
        <strain>LVPib12</strain>
    </source>
</reference>
<gene>
    <name evidence="7" type="primary">15a-3</name>
    <name type="ORF">AAEL014561</name>
</gene>
<name>V15A3_AEDAE</name>
<organism>
    <name type="scientific">Aedes aegypti</name>
    <name type="common">Yellowfever mosquito</name>
    <name type="synonym">Culex aegypti</name>
    <dbReference type="NCBI Taxonomy" id="7159"/>
    <lineage>
        <taxon>Eukaryota</taxon>
        <taxon>Metazoa</taxon>
        <taxon>Ecdysozoa</taxon>
        <taxon>Arthropoda</taxon>
        <taxon>Hexapoda</taxon>
        <taxon>Insecta</taxon>
        <taxon>Pterygota</taxon>
        <taxon>Neoptera</taxon>
        <taxon>Endopterygota</taxon>
        <taxon>Diptera</taxon>
        <taxon>Nematocera</taxon>
        <taxon>Culicoidea</taxon>
        <taxon>Culicidae</taxon>
        <taxon>Culicinae</taxon>
        <taxon>Aedini</taxon>
        <taxon>Aedes</taxon>
        <taxon>Stegomyia</taxon>
    </lineage>
</organism>
<keyword id="KW-1185">Reference proteome</keyword>
<keyword id="KW-0964">Secreted</keyword>
<keyword id="KW-0732">Signal</keyword>
<protein>
    <recommendedName>
        <fullName evidence="5">Vitelline membrane protein 15a-3</fullName>
    </recommendedName>
</protein>
<comment type="subcellular location">
    <subcellularLocation>
        <location evidence="1">Secreted</location>
    </subcellularLocation>
</comment>
<comment type="tissue specificity">
    <text evidence="4">Expressed in the middle and posterior regions of the follicle cells.</text>
</comment>
<comment type="developmental stage">
    <text evidence="4">Synthesized and released from follicular epithelium 18-24 hours after a blood meal.</text>
</comment>
<comment type="similarity">
    <text evidence="2">Belongs to the vitelline membrane protein family.</text>
</comment>
<comment type="sequence caution" evidence="6">
    <conflict type="erroneous initiation">
        <sequence resource="EMBL-CDS" id="EAT33176"/>
    </conflict>
    <text>Extended N-terminus.</text>
</comment>
<feature type="signal peptide" evidence="2">
    <location>
        <begin position="1"/>
        <end position="17"/>
    </location>
</feature>
<feature type="chain" id="PRO_0000399503" description="Vitelline membrane protein 15a-3" evidence="2">
    <location>
        <begin position="18"/>
        <end position="122"/>
    </location>
</feature>
<feature type="domain" description="VM">
    <location>
        <begin position="69"/>
        <end position="109"/>
    </location>
</feature>
<feature type="region of interest" description="Disordered" evidence="3">
    <location>
        <begin position="21"/>
        <end position="63"/>
    </location>
</feature>
<feature type="region of interest" description="Disordered" evidence="3">
    <location>
        <begin position="103"/>
        <end position="122"/>
    </location>
</feature>
<feature type="compositionally biased region" description="Pro residues" evidence="3">
    <location>
        <begin position="21"/>
        <end position="49"/>
    </location>
</feature>
<feature type="sequence conflict" description="In Ref. 1; AAB51284." evidence="6" ref="1">
    <original>F</original>
    <variation>L</variation>
    <location>
        <position position="4"/>
    </location>
</feature>
<feature type="sequence conflict" description="In Ref. 1; AAB51284." evidence="6" ref="1">
    <original>L</original>
    <variation>V</variation>
    <location>
        <position position="95"/>
    </location>
</feature>
<dbReference type="EMBL" id="U91682">
    <property type="protein sequence ID" value="AAB51284.1"/>
    <property type="molecule type" value="Genomic_DNA"/>
</dbReference>
<dbReference type="EMBL" id="EF173374">
    <property type="protein sequence ID" value="ABM68608.1"/>
    <property type="molecule type" value="Genomic_DNA"/>
</dbReference>
<dbReference type="EMBL" id="CH478349">
    <property type="protein sequence ID" value="EAT33176.1"/>
    <property type="status" value="ALT_INIT"/>
    <property type="molecule type" value="Genomic_DNA"/>
</dbReference>
<dbReference type="RefSeq" id="XP_001649022.1">
    <property type="nucleotide sequence ID" value="XM_001648972.1"/>
</dbReference>
<dbReference type="STRING" id="7159.Q16G12"/>
<dbReference type="PaxDb" id="7159-AAEL014561-PA"/>
<dbReference type="GeneID" id="5564677"/>
<dbReference type="KEGG" id="aag:5564677"/>
<dbReference type="VEuPathDB" id="VectorBase:AAEL014561"/>
<dbReference type="eggNOG" id="ENOG502T8X3">
    <property type="taxonomic scope" value="Eukaryota"/>
</dbReference>
<dbReference type="HOGENOM" id="CLU_144558_0_0_1"/>
<dbReference type="InParanoid" id="Q16G12"/>
<dbReference type="OrthoDB" id="7744666at2759"/>
<dbReference type="Proteomes" id="UP000008820">
    <property type="component" value="Unassembled WGS sequence"/>
</dbReference>
<dbReference type="Proteomes" id="UP000682892">
    <property type="component" value="Unassembled WGS sequence"/>
</dbReference>
<dbReference type="GO" id="GO:0005615">
    <property type="term" value="C:extracellular space"/>
    <property type="evidence" value="ECO:0000250"/>
    <property type="project" value="UniProtKB"/>
</dbReference>
<sequence length="122" mass="12859">MNKFIILALFAVAAASAMPNYPPPPPKPYHAPPPPPHHAHPPPPPPPPAHYGHHAHPAPAPVVHTYPVHAPHAKCGANLLVGCAPSVAHAPCVPLHGHGHGYPAPAPHYRAPESDSFDQFEE</sequence>
<evidence type="ECO:0000250" key="1">
    <source>
        <dbReference type="UniProtKB" id="P19425"/>
    </source>
</evidence>
<evidence type="ECO:0000255" key="2"/>
<evidence type="ECO:0000256" key="3">
    <source>
        <dbReference type="SAM" id="MobiDB-lite"/>
    </source>
</evidence>
<evidence type="ECO:0000269" key="4">
    <source>
    </source>
</evidence>
<evidence type="ECO:0000303" key="5">
    <source>
    </source>
</evidence>
<evidence type="ECO:0000305" key="6"/>
<evidence type="ECO:0000312" key="7">
    <source>
        <dbReference type="EMBL" id="AAB51284.1"/>
    </source>
</evidence>
<evidence type="ECO:0000312" key="8">
    <source>
        <dbReference type="EMBL" id="ABM68608.1"/>
    </source>
</evidence>
<evidence type="ECO:0000312" key="9">
    <source>
        <dbReference type="EMBL" id="EAT33176.1"/>
    </source>
</evidence>
<proteinExistence type="evidence at transcript level"/>
<accession>Q16G12</accession>
<accession>A2I881</accession>
<accession>O01362</accession>